<dbReference type="EMBL" id="U33050">
    <property type="protein sequence ID" value="AAB64914.1"/>
    <property type="molecule type" value="Genomic_DNA"/>
</dbReference>
<dbReference type="EMBL" id="BK006938">
    <property type="protein sequence ID" value="DAA12306.1"/>
    <property type="molecule type" value="Genomic_DNA"/>
</dbReference>
<dbReference type="PIR" id="S69639">
    <property type="entry name" value="S69639"/>
</dbReference>
<dbReference type="RefSeq" id="NP_010760.3">
    <property type="nucleotide sequence ID" value="NM_001180780.3"/>
</dbReference>
<dbReference type="PDB" id="3CUE">
    <property type="method" value="X-ray"/>
    <property type="resolution" value="3.70 A"/>
    <property type="chains" value="B/H/N/T=1-283"/>
</dbReference>
<dbReference type="PDB" id="7E2C">
    <property type="method" value="EM"/>
    <property type="resolution" value="4.18 A"/>
    <property type="chains" value="G=1-283"/>
</dbReference>
<dbReference type="PDB" id="7E2D">
    <property type="method" value="EM"/>
    <property type="resolution" value="3.71 A"/>
    <property type="chains" value="G=1-283"/>
</dbReference>
<dbReference type="PDB" id="7E8S">
    <property type="method" value="EM"/>
    <property type="resolution" value="4.36 A"/>
    <property type="chains" value="G/R=1-283"/>
</dbReference>
<dbReference type="PDB" id="7E8T">
    <property type="method" value="EM"/>
    <property type="resolution" value="3.80 A"/>
    <property type="chains" value="G=1-283"/>
</dbReference>
<dbReference type="PDB" id="7E93">
    <property type="method" value="EM"/>
    <property type="resolution" value="6.54 A"/>
    <property type="chains" value="G/R=1-283"/>
</dbReference>
<dbReference type="PDB" id="7E94">
    <property type="method" value="EM"/>
    <property type="resolution" value="4.67 A"/>
    <property type="chains" value="G/R=1-283"/>
</dbReference>
<dbReference type="PDB" id="7EA3">
    <property type="method" value="EM"/>
    <property type="resolution" value="4.31 A"/>
    <property type="chains" value="G/T=1-283"/>
</dbReference>
<dbReference type="PDB" id="7KMT">
    <property type="method" value="EM"/>
    <property type="resolution" value="3.70 A"/>
    <property type="chains" value="J=1-283"/>
</dbReference>
<dbReference type="PDB" id="7U05">
    <property type="method" value="EM"/>
    <property type="resolution" value="3.70 A"/>
    <property type="chains" value="J/j=1-283"/>
</dbReference>
<dbReference type="PDB" id="7U06">
    <property type="method" value="EM"/>
    <property type="resolution" value="4.20 A"/>
    <property type="chains" value="J/j=1-283"/>
</dbReference>
<dbReference type="PDBsum" id="3CUE"/>
<dbReference type="PDBsum" id="7E2C"/>
<dbReference type="PDBsum" id="7E2D"/>
<dbReference type="PDBsum" id="7E8S"/>
<dbReference type="PDBsum" id="7E8T"/>
<dbReference type="PDBsum" id="7E93"/>
<dbReference type="PDBsum" id="7E94"/>
<dbReference type="PDBsum" id="7EA3"/>
<dbReference type="PDBsum" id="7KMT"/>
<dbReference type="PDBsum" id="7U05"/>
<dbReference type="PDBsum" id="7U06"/>
<dbReference type="EMDB" id="EMD-22928"/>
<dbReference type="EMDB" id="EMD-26254"/>
<dbReference type="EMDB" id="EMD-26255"/>
<dbReference type="EMDB" id="EMD-30954"/>
<dbReference type="EMDB" id="EMD-30955"/>
<dbReference type="EMDB" id="EMD-31021"/>
<dbReference type="EMDB" id="EMD-31022"/>
<dbReference type="EMDB" id="EMD-31027"/>
<dbReference type="EMDB" id="EMD-31028"/>
<dbReference type="EMDB" id="EMD-31038"/>
<dbReference type="SMR" id="Q03337"/>
<dbReference type="BioGRID" id="32525">
    <property type="interactions" value="155"/>
</dbReference>
<dbReference type="ComplexPortal" id="CPX-1383">
    <property type="entry name" value="TRAPPIII protein complex"/>
</dbReference>
<dbReference type="ComplexPortal" id="CPX-1939">
    <property type="entry name" value="TRAPP II complex"/>
</dbReference>
<dbReference type="ComplexPortal" id="CPX-1940">
    <property type="entry name" value="TRAPPI protein complex"/>
</dbReference>
<dbReference type="DIP" id="DIP-1709N"/>
<dbReference type="FunCoup" id="Q03337">
    <property type="interactions" value="455"/>
</dbReference>
<dbReference type="IntAct" id="Q03337">
    <property type="interactions" value="15"/>
</dbReference>
<dbReference type="MINT" id="Q03337"/>
<dbReference type="STRING" id="4932.YDR472W"/>
<dbReference type="GlyGen" id="Q03337">
    <property type="glycosylation" value="2 sites, 1 O-linked glycan (2 sites)"/>
</dbReference>
<dbReference type="iPTMnet" id="Q03337"/>
<dbReference type="PaxDb" id="4932-YDR472W"/>
<dbReference type="PeptideAtlas" id="Q03337"/>
<dbReference type="EnsemblFungi" id="YDR472W_mRNA">
    <property type="protein sequence ID" value="YDR472W"/>
    <property type="gene ID" value="YDR472W"/>
</dbReference>
<dbReference type="GeneID" id="852083"/>
<dbReference type="KEGG" id="sce:YDR472W"/>
<dbReference type="AGR" id="SGD:S000002880"/>
<dbReference type="SGD" id="S000002880">
    <property type="gene designation" value="TRS31"/>
</dbReference>
<dbReference type="VEuPathDB" id="FungiDB:YDR472W"/>
<dbReference type="eggNOG" id="KOG3315">
    <property type="taxonomic scope" value="Eukaryota"/>
</dbReference>
<dbReference type="GeneTree" id="ENSGT00390000000976"/>
<dbReference type="HOGENOM" id="CLU_073154_0_0_1"/>
<dbReference type="InParanoid" id="Q03337"/>
<dbReference type="OMA" id="YMVKFDD"/>
<dbReference type="OrthoDB" id="10254842at2759"/>
<dbReference type="BioCyc" id="YEAST:G3O-29999-MONOMER"/>
<dbReference type="Reactome" id="R-SCE-204005">
    <property type="pathway name" value="COPII-mediated vesicle transport"/>
</dbReference>
<dbReference type="Reactome" id="R-SCE-8876198">
    <property type="pathway name" value="RAB GEFs exchange GTP for GDP on RABs"/>
</dbReference>
<dbReference type="BioGRID-ORCS" id="852083">
    <property type="hits" value="1 hit in 10 CRISPR screens"/>
</dbReference>
<dbReference type="EvolutionaryTrace" id="Q03337"/>
<dbReference type="PRO" id="PR:Q03337"/>
<dbReference type="Proteomes" id="UP000002311">
    <property type="component" value="Chromosome IV"/>
</dbReference>
<dbReference type="RNAct" id="Q03337">
    <property type="molecule type" value="protein"/>
</dbReference>
<dbReference type="GO" id="GO:0005829">
    <property type="term" value="C:cytosol"/>
    <property type="evidence" value="ECO:0007005"/>
    <property type="project" value="SGD"/>
</dbReference>
<dbReference type="GO" id="GO:0005783">
    <property type="term" value="C:endoplasmic reticulum"/>
    <property type="evidence" value="ECO:0007669"/>
    <property type="project" value="UniProtKB-SubCell"/>
</dbReference>
<dbReference type="GO" id="GO:0000407">
    <property type="term" value="C:phagophore assembly site"/>
    <property type="evidence" value="ECO:0000303"/>
    <property type="project" value="ComplexPortal"/>
</dbReference>
<dbReference type="GO" id="GO:1990070">
    <property type="term" value="C:TRAPPI protein complex"/>
    <property type="evidence" value="ECO:0000314"/>
    <property type="project" value="SGD"/>
</dbReference>
<dbReference type="GO" id="GO:1990071">
    <property type="term" value="C:TRAPPII protein complex"/>
    <property type="evidence" value="ECO:0000314"/>
    <property type="project" value="SGD"/>
</dbReference>
<dbReference type="GO" id="GO:1990072">
    <property type="term" value="C:TRAPPIII protein complex"/>
    <property type="evidence" value="ECO:0000314"/>
    <property type="project" value="SGD"/>
</dbReference>
<dbReference type="GO" id="GO:0006888">
    <property type="term" value="P:endoplasmic reticulum to Golgi vesicle-mediated transport"/>
    <property type="evidence" value="ECO:0000314"/>
    <property type="project" value="ComplexPortal"/>
</dbReference>
<dbReference type="GO" id="GO:0006891">
    <property type="term" value="P:intra-Golgi vesicle-mediated transport"/>
    <property type="evidence" value="ECO:0000303"/>
    <property type="project" value="ComplexPortal"/>
</dbReference>
<dbReference type="GO" id="GO:0016236">
    <property type="term" value="P:macroautophagy"/>
    <property type="evidence" value="ECO:0000303"/>
    <property type="project" value="ComplexPortal"/>
</dbReference>
<dbReference type="GO" id="GO:0042147">
    <property type="term" value="P:retrograde transport, endosome to Golgi"/>
    <property type="evidence" value="ECO:0000303"/>
    <property type="project" value="ComplexPortal"/>
</dbReference>
<dbReference type="CDD" id="cd14943">
    <property type="entry name" value="TRAPPC5_Trs31"/>
    <property type="match status" value="1"/>
</dbReference>
<dbReference type="DisProt" id="DP00835"/>
<dbReference type="Gene3D" id="3.30.1380.20">
    <property type="entry name" value="Trafficking protein particle complex subunit 3"/>
    <property type="match status" value="1"/>
</dbReference>
<dbReference type="InterPro" id="IPR024096">
    <property type="entry name" value="NO_sig/Golgi_transp_ligand-bd"/>
</dbReference>
<dbReference type="InterPro" id="IPR016696">
    <property type="entry name" value="TRAPP-I_su5"/>
</dbReference>
<dbReference type="InterPro" id="IPR007194">
    <property type="entry name" value="TRAPP_component"/>
</dbReference>
<dbReference type="PANTHER" id="PTHR20902">
    <property type="entry name" value="41-2 PROTEIN ANTIGEN-RELATED"/>
    <property type="match status" value="1"/>
</dbReference>
<dbReference type="PANTHER" id="PTHR20902:SF0">
    <property type="entry name" value="TRAFFICKING PROTEIN PARTICLE COMPLEX SUBUNIT 5"/>
    <property type="match status" value="1"/>
</dbReference>
<dbReference type="Pfam" id="PF04051">
    <property type="entry name" value="TRAPP"/>
    <property type="match status" value="1"/>
</dbReference>
<dbReference type="PIRSF" id="PIRSF017479">
    <property type="entry name" value="TRAPP_I_complex_Trs31"/>
    <property type="match status" value="1"/>
</dbReference>
<dbReference type="SUPFAM" id="SSF111126">
    <property type="entry name" value="Ligand-binding domain in the NO signalling and Golgi transport"/>
    <property type="match status" value="1"/>
</dbReference>
<feature type="chain" id="PRO_0000211585" description="Trafficking protein particle complex subunit 31">
    <location>
        <begin position="1"/>
        <end position="283"/>
    </location>
</feature>
<feature type="region of interest" description="Disordered" evidence="1">
    <location>
        <begin position="1"/>
        <end position="20"/>
    </location>
</feature>
<feature type="region of interest" description="Disordered" evidence="1">
    <location>
        <begin position="126"/>
        <end position="156"/>
    </location>
</feature>
<feature type="compositionally biased region" description="Polar residues" evidence="1">
    <location>
        <begin position="1"/>
        <end position="16"/>
    </location>
</feature>
<feature type="compositionally biased region" description="Low complexity" evidence="1">
    <location>
        <begin position="126"/>
        <end position="151"/>
    </location>
</feature>
<organism>
    <name type="scientific">Saccharomyces cerevisiae (strain ATCC 204508 / S288c)</name>
    <name type="common">Baker's yeast</name>
    <dbReference type="NCBI Taxonomy" id="559292"/>
    <lineage>
        <taxon>Eukaryota</taxon>
        <taxon>Fungi</taxon>
        <taxon>Dikarya</taxon>
        <taxon>Ascomycota</taxon>
        <taxon>Saccharomycotina</taxon>
        <taxon>Saccharomycetes</taxon>
        <taxon>Saccharomycetales</taxon>
        <taxon>Saccharomycetaceae</taxon>
        <taxon>Saccharomyces</taxon>
    </lineage>
</organism>
<accession>Q03337</accession>
<accession>D6VT96</accession>
<sequence length="283" mass="31722">MSQRIIQPSASDQQFPGKSDGYEYTVGPKQAITSEASTTYIPSRIYSESLLFKRQEASLSAMAFLFQEMISQLHRTCKTAGDFETKLSDYGHNIGIRLLELLNFRASVSPSSLPRASAFLSQNESSSKLSNASNSPGMLANSSTATSASANERLQEKQTESLSNYITKMRRRDLKILDILQFIHGTLWSYLFNHVSDDLVKSSERDNEYMIVDNFPTLTQFIPGENVSCEYFVCGIIKGFLFNAGFPCGVTAHRMPQGGHSQRTVYLIQFDRQVLDREGLRFG</sequence>
<protein>
    <recommendedName>
        <fullName>Trafficking protein particle complex subunit 31</fullName>
        <shortName>TRAPP subunit 31</shortName>
    </recommendedName>
    <alternativeName>
        <fullName>Transport protein particle 31 kDa subunit</fullName>
    </alternativeName>
</protein>
<evidence type="ECO:0000256" key="1">
    <source>
        <dbReference type="SAM" id="MobiDB-lite"/>
    </source>
</evidence>
<evidence type="ECO:0000269" key="2">
    <source>
    </source>
</evidence>
<evidence type="ECO:0000269" key="3">
    <source>
    </source>
</evidence>
<evidence type="ECO:0000269" key="4">
    <source>
    </source>
</evidence>
<evidence type="ECO:0000269" key="5">
    <source>
    </source>
</evidence>
<evidence type="ECO:0000269" key="6">
    <source>
    </source>
</evidence>
<evidence type="ECO:0000305" key="7"/>
<keyword id="KW-0002">3D-structure</keyword>
<keyword id="KW-0072">Autophagy</keyword>
<keyword id="KW-0256">Endoplasmic reticulum</keyword>
<keyword id="KW-0931">ER-Golgi transport</keyword>
<keyword id="KW-0333">Golgi apparatus</keyword>
<keyword id="KW-1185">Reference proteome</keyword>
<keyword id="KW-0813">Transport</keyword>
<gene>
    <name type="primary">TRS31</name>
    <name type="ordered locus">YDR472W</name>
</gene>
<name>TRS31_YEAST</name>
<comment type="function">
    <text evidence="2 4 5 6">Component of the TRAPP I, TRAPP II and TRAPP III complexes which act as guanine nucleotide exchange factors (GEF) for YPT1. TRAPP I plays a key role in the late stages of endoplasmic reticulum to Golgi traffic. TRAPP II plays a role in intra-Golgi transport. TRAPP III plays a role in autophagosome formation.</text>
</comment>
<comment type="subunit">
    <text evidence="2 4 5 6">Part of the multisubunit TRAPP (transport protein particle) I complex composed of BET3, BET5, TRS20, TRS23, TRS31 and TRS33. Part of the multisubunit TRAPP (transport protein particle) II complex composed of BET3, BET5, TRS20, TRS23, TRS31, TRS33, TRS65, TRS85, TRS120 and TRS130. Part of the multisubunit TRAPP (transport protein particle) III complex composed of BET3, BET5, TRS20, TRS23, TRS31, TRS33 and TRS85.</text>
</comment>
<comment type="interaction">
    <interactant intactId="EBI-38770">
        <id>Q03337</id>
    </interactant>
    <interactant intactId="EBI-3567">
        <id>P36149</id>
        <label>BET3</label>
    </interactant>
    <organismsDiffer>false</organismsDiffer>
    <experiments>14</experiments>
</comment>
<comment type="interaction">
    <interactant intactId="EBI-38770">
        <id>Q03337</id>
    </interactant>
    <interactant intactId="EBI-19468">
        <id>P38334</id>
        <label>TRS20</label>
    </interactant>
    <organismsDiffer>false</organismsDiffer>
    <experiments>5</experiments>
</comment>
<comment type="subcellular location">
    <subcellularLocation>
        <location>Golgi apparatus</location>
        <location>cis-Golgi network</location>
    </subcellularLocation>
    <subcellularLocation>
        <location>Endoplasmic reticulum</location>
    </subcellularLocation>
    <subcellularLocation>
        <location>Preautophagosomal structure</location>
    </subcellularLocation>
</comment>
<comment type="miscellaneous">
    <text evidence="3">Present with 8350 molecules/cell in log phase SD medium.</text>
</comment>
<comment type="similarity">
    <text evidence="7">Belongs to the TRAPP small subunits family. BET3 subfamily.</text>
</comment>
<proteinExistence type="evidence at protein level"/>
<reference key="1">
    <citation type="journal article" date="1997" name="Nature">
        <title>The nucleotide sequence of Saccharomyces cerevisiae chromosome IV.</title>
        <authorList>
            <person name="Jacq C."/>
            <person name="Alt-Moerbe J."/>
            <person name="Andre B."/>
            <person name="Arnold W."/>
            <person name="Bahr A."/>
            <person name="Ballesta J.P.G."/>
            <person name="Bargues M."/>
            <person name="Baron L."/>
            <person name="Becker A."/>
            <person name="Biteau N."/>
            <person name="Bloecker H."/>
            <person name="Blugeon C."/>
            <person name="Boskovic J."/>
            <person name="Brandt P."/>
            <person name="Brueckner M."/>
            <person name="Buitrago M.J."/>
            <person name="Coster F."/>
            <person name="Delaveau T."/>
            <person name="del Rey F."/>
            <person name="Dujon B."/>
            <person name="Eide L.G."/>
            <person name="Garcia-Cantalejo J.M."/>
            <person name="Goffeau A."/>
            <person name="Gomez-Peris A."/>
            <person name="Granotier C."/>
            <person name="Hanemann V."/>
            <person name="Hankeln T."/>
            <person name="Hoheisel J.D."/>
            <person name="Jaeger W."/>
            <person name="Jimenez A."/>
            <person name="Jonniaux J.-L."/>
            <person name="Kraemer C."/>
            <person name="Kuester H."/>
            <person name="Laamanen P."/>
            <person name="Legros Y."/>
            <person name="Louis E.J."/>
            <person name="Moeller-Rieker S."/>
            <person name="Monnet A."/>
            <person name="Moro M."/>
            <person name="Mueller-Auer S."/>
            <person name="Nussbaumer B."/>
            <person name="Paricio N."/>
            <person name="Paulin L."/>
            <person name="Perea J."/>
            <person name="Perez-Alonso M."/>
            <person name="Perez-Ortin J.E."/>
            <person name="Pohl T.M."/>
            <person name="Prydz H."/>
            <person name="Purnelle B."/>
            <person name="Rasmussen S.W."/>
            <person name="Remacha M.A."/>
            <person name="Revuelta J.L."/>
            <person name="Rieger M."/>
            <person name="Salom D."/>
            <person name="Saluz H.P."/>
            <person name="Saiz J.E."/>
            <person name="Saren A.-M."/>
            <person name="Schaefer M."/>
            <person name="Scharfe M."/>
            <person name="Schmidt E.R."/>
            <person name="Schneider C."/>
            <person name="Scholler P."/>
            <person name="Schwarz S."/>
            <person name="Soler-Mira A."/>
            <person name="Urrestarazu L.A."/>
            <person name="Verhasselt P."/>
            <person name="Vissers S."/>
            <person name="Voet M."/>
            <person name="Volckaert G."/>
            <person name="Wagner G."/>
            <person name="Wambutt R."/>
            <person name="Wedler E."/>
            <person name="Wedler H."/>
            <person name="Woelfl S."/>
            <person name="Harris D.E."/>
            <person name="Bowman S."/>
            <person name="Brown D."/>
            <person name="Churcher C.M."/>
            <person name="Connor R."/>
            <person name="Dedman K."/>
            <person name="Gentles S."/>
            <person name="Hamlin N."/>
            <person name="Hunt S."/>
            <person name="Jones L."/>
            <person name="McDonald S."/>
            <person name="Murphy L.D."/>
            <person name="Niblett D."/>
            <person name="Odell C."/>
            <person name="Oliver K."/>
            <person name="Rajandream M.A."/>
            <person name="Richards C."/>
            <person name="Shore L."/>
            <person name="Walsh S.V."/>
            <person name="Barrell B.G."/>
            <person name="Dietrich F.S."/>
            <person name="Mulligan J.T."/>
            <person name="Allen E."/>
            <person name="Araujo R."/>
            <person name="Aviles E."/>
            <person name="Berno A."/>
            <person name="Carpenter J."/>
            <person name="Chen E."/>
            <person name="Cherry J.M."/>
            <person name="Chung E."/>
            <person name="Duncan M."/>
            <person name="Hunicke-Smith S."/>
            <person name="Hyman R.W."/>
            <person name="Komp C."/>
            <person name="Lashkari D."/>
            <person name="Lew H."/>
            <person name="Lin D."/>
            <person name="Mosedale D."/>
            <person name="Nakahara K."/>
            <person name="Namath A."/>
            <person name="Oefner P."/>
            <person name="Oh C."/>
            <person name="Petel F.X."/>
            <person name="Roberts D."/>
            <person name="Schramm S."/>
            <person name="Schroeder M."/>
            <person name="Shogren T."/>
            <person name="Shroff N."/>
            <person name="Winant A."/>
            <person name="Yelton M.A."/>
            <person name="Botstein D."/>
            <person name="Davis R.W."/>
            <person name="Johnston M."/>
            <person name="Andrews S."/>
            <person name="Brinkman R."/>
            <person name="Cooper J."/>
            <person name="Ding H."/>
            <person name="Du Z."/>
            <person name="Favello A."/>
            <person name="Fulton L."/>
            <person name="Gattung S."/>
            <person name="Greco T."/>
            <person name="Hallsworth K."/>
            <person name="Hawkins J."/>
            <person name="Hillier L.W."/>
            <person name="Jier M."/>
            <person name="Johnson D."/>
            <person name="Johnston L."/>
            <person name="Kirsten J."/>
            <person name="Kucaba T."/>
            <person name="Langston Y."/>
            <person name="Latreille P."/>
            <person name="Le T."/>
            <person name="Mardis E."/>
            <person name="Menezes S."/>
            <person name="Miller N."/>
            <person name="Nhan M."/>
            <person name="Pauley A."/>
            <person name="Peluso D."/>
            <person name="Rifkin L."/>
            <person name="Riles L."/>
            <person name="Taich A."/>
            <person name="Trevaskis E."/>
            <person name="Vignati D."/>
            <person name="Wilcox L."/>
            <person name="Wohldman P."/>
            <person name="Vaudin M."/>
            <person name="Wilson R."/>
            <person name="Waterston R."/>
            <person name="Albermann K."/>
            <person name="Hani J."/>
            <person name="Heumann K."/>
            <person name="Kleine K."/>
            <person name="Mewes H.-W."/>
            <person name="Zollner A."/>
            <person name="Zaccaria P."/>
        </authorList>
    </citation>
    <scope>NUCLEOTIDE SEQUENCE [LARGE SCALE GENOMIC DNA]</scope>
    <source>
        <strain>ATCC 204508 / S288c</strain>
    </source>
</reference>
<reference key="2">
    <citation type="journal article" date="2014" name="G3 (Bethesda)">
        <title>The reference genome sequence of Saccharomyces cerevisiae: Then and now.</title>
        <authorList>
            <person name="Engel S.R."/>
            <person name="Dietrich F.S."/>
            <person name="Fisk D.G."/>
            <person name="Binkley G."/>
            <person name="Balakrishnan R."/>
            <person name="Costanzo M.C."/>
            <person name="Dwight S.S."/>
            <person name="Hitz B.C."/>
            <person name="Karra K."/>
            <person name="Nash R.S."/>
            <person name="Weng S."/>
            <person name="Wong E.D."/>
            <person name="Lloyd P."/>
            <person name="Skrzypek M.S."/>
            <person name="Miyasato S.R."/>
            <person name="Simison M."/>
            <person name="Cherry J.M."/>
        </authorList>
    </citation>
    <scope>GENOME REANNOTATION</scope>
    <source>
        <strain>ATCC 204508 / S288c</strain>
    </source>
</reference>
<reference key="3">
    <citation type="journal article" date="1998" name="EMBO J.">
        <title>TRAPP, a highly conserved novel complex on the cis-Golgi that mediates vesicle docking and fusion.</title>
        <authorList>
            <person name="Sacher M."/>
            <person name="Jiang Y."/>
            <person name="Barrowman J."/>
            <person name="Scarpa A."/>
            <person name="Burston J."/>
            <person name="Zhang L."/>
            <person name="Schieltz D."/>
            <person name="Yates J.R. III"/>
            <person name="Abeliovich H."/>
            <person name="Ferro-Novick S."/>
        </authorList>
    </citation>
    <scope>FUNCTION</scope>
    <scope>IDENTIFICATION IN THE TRAPP II COMPLEX</scope>
</reference>
<reference key="4">
    <citation type="journal article" date="2001" name="Mol. Cell">
        <title>TRAPP I implicated in the specificity of tethering in ER-to-Golgi transport.</title>
        <authorList>
            <person name="Sacher M."/>
            <person name="Barrowman J."/>
            <person name="Wang W."/>
            <person name="Horecka J."/>
            <person name="Zhang Y."/>
            <person name="Pypaert M."/>
            <person name="Ferro-Novick S."/>
        </authorList>
    </citation>
    <scope>FUNCTION OF THE TRAPP II COMPLEX</scope>
    <scope>IDENTIFICATION IN THE TRAPP II COMPLEX</scope>
    <scope>FUNCTION OF THE TRAPP I COMPLEX</scope>
    <scope>IDENTIFICATION IN THE TRAPP I COMPLEX</scope>
    <scope>SUBCELLULAR LOCATION</scope>
</reference>
<reference key="5">
    <citation type="journal article" date="2003" name="Nature">
        <title>Global analysis of protein expression in yeast.</title>
        <authorList>
            <person name="Ghaemmaghami S."/>
            <person name="Huh W.-K."/>
            <person name="Bower K."/>
            <person name="Howson R.W."/>
            <person name="Belle A."/>
            <person name="Dephoure N."/>
            <person name="O'Shea E.K."/>
            <person name="Weissman J.S."/>
        </authorList>
    </citation>
    <scope>LEVEL OF PROTEIN EXPRESSION [LARGE SCALE ANALYSIS]</scope>
</reference>
<reference key="6">
    <citation type="journal article" date="2008" name="Mol. Cell. Proteomics">
        <title>A multidimensional chromatography technology for in-depth phosphoproteome analysis.</title>
        <authorList>
            <person name="Albuquerque C.P."/>
            <person name="Smolka M.B."/>
            <person name="Payne S.H."/>
            <person name="Bafna V."/>
            <person name="Eng J."/>
            <person name="Zhou H."/>
        </authorList>
    </citation>
    <scope>IDENTIFICATION BY MASS SPECTROMETRY [LARGE SCALE ANALYSIS]</scope>
</reference>
<reference key="7">
    <citation type="journal article" date="2010" name="Nat. Struct. Mol. Biol.">
        <title>Molecular architecture of the TRAPPII complex and implications for vesicle tethering.</title>
        <authorList>
            <person name="Yip C.K."/>
            <person name="Berscheminski J."/>
            <person name="Walz T."/>
        </authorList>
    </citation>
    <scope>IDENTIFICATION IN THE TRAP II COMPLEX</scope>
    <scope>FUNCTION OF THE TRAP II COMPLEX</scope>
</reference>
<reference key="8">
    <citation type="journal article" date="2010" name="Proc. Natl. Acad. Sci. U.S.A.">
        <title>Trs85 directs a Ypt1 GEF, TRAPPIII, to the phagophore to promote autophagy.</title>
        <authorList>
            <person name="Lynch-Day M.A."/>
            <person name="Bhandari D."/>
            <person name="Menon S."/>
            <person name="Huang J."/>
            <person name="Cai H."/>
            <person name="Bartholomew C.R."/>
            <person name="Brumell J.H."/>
            <person name="Ferro-Novick S."/>
            <person name="Klionsky D.J."/>
        </authorList>
    </citation>
    <scope>IDENTIFICATION IN THE TRAPP III COMPLEX</scope>
    <scope>SUBCELLULAR LOCATION</scope>
    <scope>FUNCTION OF THE TRAPP III COMPLEX</scope>
</reference>